<feature type="chain" id="PRO_0000201396" description="Hydrogenase maturation factor HypC">
    <location>
        <begin position="1"/>
        <end position="75"/>
    </location>
</feature>
<feature type="sequence conflict" description="In Ref. 2; CAA85444." evidence="2" ref="2">
    <original>R</original>
    <variation>A</variation>
    <location>
        <position position="69"/>
    </location>
</feature>
<reference key="1">
    <citation type="journal article" date="1993" name="Mol. Microbiol.">
        <title>Molecular analysis of a microaerobically induced operon required for hydrogenase synthesis in Rhizobium leguminosarum biovar viciae.</title>
        <authorList>
            <person name="Rey L."/>
            <person name="Murillo J."/>
            <person name="Hernando Y."/>
            <person name="Hidalgo E."/>
            <person name="Cabrera E."/>
            <person name="Imperial J."/>
            <person name="Ruiz-Argueso T."/>
        </authorList>
    </citation>
    <scope>NUCLEOTIDE SEQUENCE [GENOMIC DNA]</scope>
    <source>
        <strain>128c53</strain>
    </source>
</reference>
<reference key="2">
    <citation type="journal article" date="1997" name="Mol. Plant Microbe Interact.">
        <title>Organization of the hup-region and its differential transcription in non-symbiotic and symbiotic cells of Rhizobium leguminosarum bv. viciae B10.</title>
        <authorList>
            <person name="Brito B."/>
            <person name="Palacios J.M."/>
            <person name="Imperial J."/>
            <person name="Ruiz-Argueso T."/>
            <person name="Yang W.C."/>
            <person name="Bisseling T."/>
            <person name="Schmitt H."/>
            <person name="Kerl V."/>
            <person name="Bauer T."/>
            <person name="Kokotek W."/>
            <person name="Lotz W."/>
        </authorList>
    </citation>
    <scope>NUCLEOTIDE SEQUENCE [GENOMIC DNA]</scope>
    <source>
        <strain>B10</strain>
    </source>
</reference>
<accession>P28157</accession>
<accession>O07040</accession>
<protein>
    <recommendedName>
        <fullName evidence="1">Hydrogenase maturation factor HypC</fullName>
    </recommendedName>
</protein>
<evidence type="ECO:0000250" key="1">
    <source>
        <dbReference type="UniProtKB" id="P0AAM3"/>
    </source>
</evidence>
<evidence type="ECO:0000305" key="2"/>
<gene>
    <name type="primary">hypC</name>
    <name type="synonym">hupO</name>
</gene>
<dbReference type="EMBL" id="X52974">
    <property type="protein sequence ID" value="CAA37162.1"/>
    <property type="molecule type" value="Genomic_DNA"/>
</dbReference>
<dbReference type="EMBL" id="Z36981">
    <property type="protein sequence ID" value="CAA85444.2"/>
    <property type="molecule type" value="Genomic_DNA"/>
</dbReference>
<dbReference type="PIR" id="S32876">
    <property type="entry name" value="S32876"/>
</dbReference>
<dbReference type="RefSeq" id="WP_018517060.1">
    <property type="nucleotide sequence ID" value="NZ_WIEJ01000010.1"/>
</dbReference>
<dbReference type="SMR" id="P28157"/>
<dbReference type="UniPathway" id="UPA00335"/>
<dbReference type="GO" id="GO:1902670">
    <property type="term" value="F:carbon dioxide binding"/>
    <property type="evidence" value="ECO:0007669"/>
    <property type="project" value="TreeGrafter"/>
</dbReference>
<dbReference type="GO" id="GO:0005506">
    <property type="term" value="F:iron ion binding"/>
    <property type="evidence" value="ECO:0007669"/>
    <property type="project" value="TreeGrafter"/>
</dbReference>
<dbReference type="GO" id="GO:0051604">
    <property type="term" value="P:protein maturation"/>
    <property type="evidence" value="ECO:0007669"/>
    <property type="project" value="TreeGrafter"/>
</dbReference>
<dbReference type="FunFam" id="2.30.30.140:FF:000022">
    <property type="entry name" value="Hydrogenase assembly chaperone HybG"/>
    <property type="match status" value="1"/>
</dbReference>
<dbReference type="Gene3D" id="2.30.30.140">
    <property type="match status" value="1"/>
</dbReference>
<dbReference type="InterPro" id="IPR019812">
    <property type="entry name" value="Hydgase_assmbl_chp_CS"/>
</dbReference>
<dbReference type="InterPro" id="IPR001109">
    <property type="entry name" value="Hydrogenase_HupF/HypC"/>
</dbReference>
<dbReference type="NCBIfam" id="TIGR00074">
    <property type="entry name" value="hypC_hupF"/>
    <property type="match status" value="1"/>
</dbReference>
<dbReference type="PANTHER" id="PTHR35177">
    <property type="entry name" value="HYDROGENASE MATURATION FACTOR HYBG"/>
    <property type="match status" value="1"/>
</dbReference>
<dbReference type="PANTHER" id="PTHR35177:SF2">
    <property type="entry name" value="HYDROGENASE MATURATION FACTOR HYBG"/>
    <property type="match status" value="1"/>
</dbReference>
<dbReference type="Pfam" id="PF01455">
    <property type="entry name" value="HupF_HypC"/>
    <property type="match status" value="1"/>
</dbReference>
<dbReference type="PRINTS" id="PR00445">
    <property type="entry name" value="HUPFHYPC"/>
</dbReference>
<dbReference type="SUPFAM" id="SSF159127">
    <property type="entry name" value="HupF/HypC-like"/>
    <property type="match status" value="1"/>
</dbReference>
<dbReference type="PROSITE" id="PS01097">
    <property type="entry name" value="HUPF_HYPC"/>
    <property type="match status" value="1"/>
</dbReference>
<organism>
    <name type="scientific">Rhizobium leguminosarum bv. viciae</name>
    <dbReference type="NCBI Taxonomy" id="387"/>
    <lineage>
        <taxon>Bacteria</taxon>
        <taxon>Pseudomonadati</taxon>
        <taxon>Pseudomonadota</taxon>
        <taxon>Alphaproteobacteria</taxon>
        <taxon>Hyphomicrobiales</taxon>
        <taxon>Rhizobiaceae</taxon>
        <taxon>Rhizobium/Agrobacterium group</taxon>
        <taxon>Rhizobium</taxon>
    </lineage>
</organism>
<comment type="function">
    <text evidence="1">Involved in the maturation of [NiFe] hydrogenases. Involved in the biosynthesis of the Fe(CN)(2)CO cofactor.</text>
</comment>
<comment type="pathway">
    <text evidence="1">Protein modification; [NiFe] hydrogenase maturation.</text>
</comment>
<comment type="similarity">
    <text evidence="2">Belongs to the HupF/HypC family.</text>
</comment>
<name>HYPC_RHILV</name>
<proteinExistence type="inferred from homology"/>
<sequence length="75" mass="8050">MCLAIPVQVKELLPDNMAKVTLDGVSKIVSTALVDDVKVGDYVVLHVGYALAKIDPEEAERTLALIRERAMGDAA</sequence>